<feature type="chain" id="PRO_0000368297" description="ATP synthase subunit b">
    <location>
        <begin position="1"/>
        <end position="156"/>
    </location>
</feature>
<feature type="transmembrane region" description="Helical" evidence="1">
    <location>
        <begin position="7"/>
        <end position="27"/>
    </location>
</feature>
<reference key="1">
    <citation type="submission" date="2008-06" db="EMBL/GenBank/DDBJ databases">
        <title>Genome and proteome analysis of A. pleuropneumoniae serotype 7.</title>
        <authorList>
            <person name="Linke B."/>
            <person name="Buettner F."/>
            <person name="Martinez-Arias R."/>
            <person name="Goesmann A."/>
            <person name="Baltes N."/>
            <person name="Tegetmeyer H."/>
            <person name="Singh M."/>
            <person name="Gerlach G.F."/>
        </authorList>
    </citation>
    <scope>NUCLEOTIDE SEQUENCE [LARGE SCALE GENOMIC DNA]</scope>
    <source>
        <strain>AP76</strain>
    </source>
</reference>
<dbReference type="EMBL" id="CP001091">
    <property type="protein sequence ID" value="ACE62364.1"/>
    <property type="molecule type" value="Genomic_DNA"/>
</dbReference>
<dbReference type="RefSeq" id="WP_005599069.1">
    <property type="nucleotide sequence ID" value="NC_010939.1"/>
</dbReference>
<dbReference type="SMR" id="B3H2P7"/>
<dbReference type="GeneID" id="48599940"/>
<dbReference type="KEGG" id="apa:APP7_1712"/>
<dbReference type="HOGENOM" id="CLU_079215_4_5_6"/>
<dbReference type="Proteomes" id="UP000001226">
    <property type="component" value="Chromosome"/>
</dbReference>
<dbReference type="GO" id="GO:0005886">
    <property type="term" value="C:plasma membrane"/>
    <property type="evidence" value="ECO:0007669"/>
    <property type="project" value="UniProtKB-SubCell"/>
</dbReference>
<dbReference type="GO" id="GO:0045259">
    <property type="term" value="C:proton-transporting ATP synthase complex"/>
    <property type="evidence" value="ECO:0007669"/>
    <property type="project" value="UniProtKB-KW"/>
</dbReference>
<dbReference type="GO" id="GO:0046933">
    <property type="term" value="F:proton-transporting ATP synthase activity, rotational mechanism"/>
    <property type="evidence" value="ECO:0007669"/>
    <property type="project" value="UniProtKB-UniRule"/>
</dbReference>
<dbReference type="GO" id="GO:0046961">
    <property type="term" value="F:proton-transporting ATPase activity, rotational mechanism"/>
    <property type="evidence" value="ECO:0007669"/>
    <property type="project" value="TreeGrafter"/>
</dbReference>
<dbReference type="CDD" id="cd06503">
    <property type="entry name" value="ATP-synt_Fo_b"/>
    <property type="match status" value="1"/>
</dbReference>
<dbReference type="FunFam" id="1.20.5.620:FF:000001">
    <property type="entry name" value="ATP synthase subunit b"/>
    <property type="match status" value="1"/>
</dbReference>
<dbReference type="Gene3D" id="1.20.5.620">
    <property type="entry name" value="F1F0 ATP synthase subunit B, membrane domain"/>
    <property type="match status" value="1"/>
</dbReference>
<dbReference type="HAMAP" id="MF_01398">
    <property type="entry name" value="ATP_synth_b_bprime"/>
    <property type="match status" value="1"/>
</dbReference>
<dbReference type="InterPro" id="IPR028987">
    <property type="entry name" value="ATP_synth_B-like_membr_sf"/>
</dbReference>
<dbReference type="InterPro" id="IPR002146">
    <property type="entry name" value="ATP_synth_b/b'su_bac/chlpt"/>
</dbReference>
<dbReference type="InterPro" id="IPR005864">
    <property type="entry name" value="ATP_synth_F0_bsu_bac"/>
</dbReference>
<dbReference type="InterPro" id="IPR050059">
    <property type="entry name" value="ATP_synthase_B_chain"/>
</dbReference>
<dbReference type="NCBIfam" id="TIGR01144">
    <property type="entry name" value="ATP_synt_b"/>
    <property type="match status" value="1"/>
</dbReference>
<dbReference type="NCBIfam" id="NF004411">
    <property type="entry name" value="PRK05759.1-2"/>
    <property type="match status" value="1"/>
</dbReference>
<dbReference type="NCBIfam" id="NF004413">
    <property type="entry name" value="PRK05759.1-4"/>
    <property type="match status" value="1"/>
</dbReference>
<dbReference type="PANTHER" id="PTHR33445:SF1">
    <property type="entry name" value="ATP SYNTHASE SUBUNIT B"/>
    <property type="match status" value="1"/>
</dbReference>
<dbReference type="PANTHER" id="PTHR33445">
    <property type="entry name" value="ATP SYNTHASE SUBUNIT B', CHLOROPLASTIC"/>
    <property type="match status" value="1"/>
</dbReference>
<dbReference type="Pfam" id="PF00430">
    <property type="entry name" value="ATP-synt_B"/>
    <property type="match status" value="1"/>
</dbReference>
<dbReference type="SUPFAM" id="SSF81573">
    <property type="entry name" value="F1F0 ATP synthase subunit B, membrane domain"/>
    <property type="match status" value="1"/>
</dbReference>
<name>ATPF_ACTP7</name>
<organism>
    <name type="scientific">Actinobacillus pleuropneumoniae serotype 7 (strain AP76)</name>
    <dbReference type="NCBI Taxonomy" id="537457"/>
    <lineage>
        <taxon>Bacteria</taxon>
        <taxon>Pseudomonadati</taxon>
        <taxon>Pseudomonadota</taxon>
        <taxon>Gammaproteobacteria</taxon>
        <taxon>Pasteurellales</taxon>
        <taxon>Pasteurellaceae</taxon>
        <taxon>Actinobacillus</taxon>
    </lineage>
</organism>
<evidence type="ECO:0000255" key="1">
    <source>
        <dbReference type="HAMAP-Rule" id="MF_01398"/>
    </source>
</evidence>
<protein>
    <recommendedName>
        <fullName evidence="1">ATP synthase subunit b</fullName>
    </recommendedName>
    <alternativeName>
        <fullName evidence="1">ATP synthase F(0) sector subunit b</fullName>
    </alternativeName>
    <alternativeName>
        <fullName evidence="1">ATPase subunit I</fullName>
    </alternativeName>
    <alternativeName>
        <fullName evidence="1">F-type ATPase subunit b</fullName>
        <shortName evidence="1">F-ATPase subunit b</shortName>
    </alternativeName>
</protein>
<sequence length="156" mass="17258">MNLNATLIGQLIAFALFVAFCMKFVWPPLIKAIEERQANIANALASAEKAKQEQADSKAAADQEILKAKEEAQKIIDLATKRRNEILESVQAEAEIERQRIIEQGHAEVESERKRVQEELRQKVAALAVAGAEKIVGRSVDQAANNDIIDKLVAEL</sequence>
<keyword id="KW-0066">ATP synthesis</keyword>
<keyword id="KW-0997">Cell inner membrane</keyword>
<keyword id="KW-1003">Cell membrane</keyword>
<keyword id="KW-0138">CF(0)</keyword>
<keyword id="KW-0375">Hydrogen ion transport</keyword>
<keyword id="KW-0406">Ion transport</keyword>
<keyword id="KW-0472">Membrane</keyword>
<keyword id="KW-0812">Transmembrane</keyword>
<keyword id="KW-1133">Transmembrane helix</keyword>
<keyword id="KW-0813">Transport</keyword>
<gene>
    <name evidence="1" type="primary">atpF</name>
    <name type="ordered locus">APP7_1712</name>
</gene>
<comment type="function">
    <text evidence="1">F(1)F(0) ATP synthase produces ATP from ADP in the presence of a proton or sodium gradient. F-type ATPases consist of two structural domains, F(1) containing the extramembraneous catalytic core and F(0) containing the membrane proton channel, linked together by a central stalk and a peripheral stalk. During catalysis, ATP synthesis in the catalytic domain of F(1) is coupled via a rotary mechanism of the central stalk subunits to proton translocation.</text>
</comment>
<comment type="function">
    <text evidence="1">Component of the F(0) channel, it forms part of the peripheral stalk, linking F(1) to F(0).</text>
</comment>
<comment type="subunit">
    <text evidence="1">F-type ATPases have 2 components, F(1) - the catalytic core - and F(0) - the membrane proton channel. F(1) has five subunits: alpha(3), beta(3), gamma(1), delta(1), epsilon(1). F(0) has three main subunits: a(1), b(2) and c(10-14). The alpha and beta chains form an alternating ring which encloses part of the gamma chain. F(1) is attached to F(0) by a central stalk formed by the gamma and epsilon chains, while a peripheral stalk is formed by the delta and b chains.</text>
</comment>
<comment type="subcellular location">
    <subcellularLocation>
        <location evidence="1">Cell inner membrane</location>
        <topology evidence="1">Single-pass membrane protein</topology>
    </subcellularLocation>
</comment>
<comment type="similarity">
    <text evidence="1">Belongs to the ATPase B chain family.</text>
</comment>
<proteinExistence type="inferred from homology"/>
<accession>B3H2P7</accession>